<comment type="function">
    <text evidence="1">Provides the (R)-glutamate required for cell wall biosynthesis.</text>
</comment>
<comment type="catalytic activity">
    <reaction evidence="1">
        <text>L-glutamate = D-glutamate</text>
        <dbReference type="Rhea" id="RHEA:12813"/>
        <dbReference type="ChEBI" id="CHEBI:29985"/>
        <dbReference type="ChEBI" id="CHEBI:29986"/>
        <dbReference type="EC" id="5.1.1.3"/>
    </reaction>
</comment>
<comment type="pathway">
    <text evidence="1">Cell wall biogenesis; peptidoglycan biosynthesis.</text>
</comment>
<comment type="similarity">
    <text evidence="1">Belongs to the aspartate/glutamate racemases family.</text>
</comment>
<dbReference type="EC" id="5.1.1.3" evidence="1"/>
<dbReference type="EMBL" id="CP000569">
    <property type="protein sequence ID" value="ABN74923.1"/>
    <property type="molecule type" value="Genomic_DNA"/>
</dbReference>
<dbReference type="RefSeq" id="WP_005609277.1">
    <property type="nucleotide sequence ID" value="NC_009053.1"/>
</dbReference>
<dbReference type="SMR" id="A3N3D7"/>
<dbReference type="STRING" id="416269.APL_1841"/>
<dbReference type="EnsemblBacteria" id="ABN74923">
    <property type="protein sequence ID" value="ABN74923"/>
    <property type="gene ID" value="APL_1841"/>
</dbReference>
<dbReference type="KEGG" id="apl:APL_1841"/>
<dbReference type="eggNOG" id="COG0796">
    <property type="taxonomic scope" value="Bacteria"/>
</dbReference>
<dbReference type="HOGENOM" id="CLU_052344_2_0_6"/>
<dbReference type="UniPathway" id="UPA00219"/>
<dbReference type="Proteomes" id="UP000001432">
    <property type="component" value="Chromosome"/>
</dbReference>
<dbReference type="GO" id="GO:0008881">
    <property type="term" value="F:glutamate racemase activity"/>
    <property type="evidence" value="ECO:0007669"/>
    <property type="project" value="UniProtKB-UniRule"/>
</dbReference>
<dbReference type="GO" id="GO:0071555">
    <property type="term" value="P:cell wall organization"/>
    <property type="evidence" value="ECO:0007669"/>
    <property type="project" value="UniProtKB-KW"/>
</dbReference>
<dbReference type="GO" id="GO:0009252">
    <property type="term" value="P:peptidoglycan biosynthetic process"/>
    <property type="evidence" value="ECO:0007669"/>
    <property type="project" value="UniProtKB-UniRule"/>
</dbReference>
<dbReference type="GO" id="GO:0008360">
    <property type="term" value="P:regulation of cell shape"/>
    <property type="evidence" value="ECO:0007669"/>
    <property type="project" value="UniProtKB-KW"/>
</dbReference>
<dbReference type="FunFam" id="3.40.50.1860:FF:000001">
    <property type="entry name" value="Glutamate racemase"/>
    <property type="match status" value="1"/>
</dbReference>
<dbReference type="Gene3D" id="3.40.50.1860">
    <property type="match status" value="2"/>
</dbReference>
<dbReference type="HAMAP" id="MF_00258">
    <property type="entry name" value="Glu_racemase"/>
    <property type="match status" value="1"/>
</dbReference>
<dbReference type="InterPro" id="IPR015942">
    <property type="entry name" value="Asp/Glu/hydantoin_racemase"/>
</dbReference>
<dbReference type="InterPro" id="IPR001920">
    <property type="entry name" value="Asp/Glu_race"/>
</dbReference>
<dbReference type="InterPro" id="IPR018187">
    <property type="entry name" value="Asp/Glu_racemase_AS_1"/>
</dbReference>
<dbReference type="InterPro" id="IPR033134">
    <property type="entry name" value="Asp/Glu_racemase_AS_2"/>
</dbReference>
<dbReference type="InterPro" id="IPR004391">
    <property type="entry name" value="Glu_race"/>
</dbReference>
<dbReference type="NCBIfam" id="TIGR00067">
    <property type="entry name" value="glut_race"/>
    <property type="match status" value="1"/>
</dbReference>
<dbReference type="PANTHER" id="PTHR21198">
    <property type="entry name" value="GLUTAMATE RACEMASE"/>
    <property type="match status" value="1"/>
</dbReference>
<dbReference type="PANTHER" id="PTHR21198:SF2">
    <property type="entry name" value="GLUTAMATE RACEMASE"/>
    <property type="match status" value="1"/>
</dbReference>
<dbReference type="Pfam" id="PF01177">
    <property type="entry name" value="Asp_Glu_race"/>
    <property type="match status" value="1"/>
</dbReference>
<dbReference type="SUPFAM" id="SSF53681">
    <property type="entry name" value="Aspartate/glutamate racemase"/>
    <property type="match status" value="2"/>
</dbReference>
<dbReference type="PROSITE" id="PS00923">
    <property type="entry name" value="ASP_GLU_RACEMASE_1"/>
    <property type="match status" value="1"/>
</dbReference>
<dbReference type="PROSITE" id="PS00924">
    <property type="entry name" value="ASP_GLU_RACEMASE_2"/>
    <property type="match status" value="1"/>
</dbReference>
<feature type="chain" id="PRO_1000047540" description="Glutamate racemase">
    <location>
        <begin position="1"/>
        <end position="265"/>
    </location>
</feature>
<feature type="active site" description="Proton donor/acceptor" evidence="1">
    <location>
        <position position="73"/>
    </location>
</feature>
<feature type="active site" description="Proton donor/acceptor" evidence="1">
    <location>
        <position position="184"/>
    </location>
</feature>
<feature type="binding site" evidence="1">
    <location>
        <begin position="9"/>
        <end position="10"/>
    </location>
    <ligand>
        <name>substrate</name>
    </ligand>
</feature>
<feature type="binding site" evidence="1">
    <location>
        <begin position="41"/>
        <end position="42"/>
    </location>
    <ligand>
        <name>substrate</name>
    </ligand>
</feature>
<feature type="binding site" evidence="1">
    <location>
        <begin position="74"/>
        <end position="75"/>
    </location>
    <ligand>
        <name>substrate</name>
    </ligand>
</feature>
<feature type="binding site" evidence="1">
    <location>
        <begin position="185"/>
        <end position="186"/>
    </location>
    <ligand>
        <name>substrate</name>
    </ligand>
</feature>
<accession>A3N3D7</accession>
<name>MURI_ACTP2</name>
<organism>
    <name type="scientific">Actinobacillus pleuropneumoniae serotype 5b (strain L20)</name>
    <dbReference type="NCBI Taxonomy" id="416269"/>
    <lineage>
        <taxon>Bacteria</taxon>
        <taxon>Pseudomonadati</taxon>
        <taxon>Pseudomonadota</taxon>
        <taxon>Gammaproteobacteria</taxon>
        <taxon>Pasteurellales</taxon>
        <taxon>Pasteurellaceae</taxon>
        <taxon>Actinobacillus</taxon>
    </lineage>
</organism>
<proteinExistence type="inferred from homology"/>
<evidence type="ECO:0000255" key="1">
    <source>
        <dbReference type="HAMAP-Rule" id="MF_00258"/>
    </source>
</evidence>
<keyword id="KW-0133">Cell shape</keyword>
<keyword id="KW-0961">Cell wall biogenesis/degradation</keyword>
<keyword id="KW-0413">Isomerase</keyword>
<keyword id="KW-0573">Peptidoglycan synthesis</keyword>
<keyword id="KW-1185">Reference proteome</keyword>
<reference key="1">
    <citation type="journal article" date="2008" name="J. Bacteriol.">
        <title>The complete genome sequence of Actinobacillus pleuropneumoniae L20 (serotype 5b).</title>
        <authorList>
            <person name="Foote S.J."/>
            <person name="Bosse J.T."/>
            <person name="Bouevitch A.B."/>
            <person name="Langford P.R."/>
            <person name="Young N.M."/>
            <person name="Nash J.H.E."/>
        </authorList>
    </citation>
    <scope>NUCLEOTIDE SEQUENCE [LARGE SCALE GENOMIC DNA]</scope>
    <source>
        <strain>L20</strain>
    </source>
</reference>
<protein>
    <recommendedName>
        <fullName evidence="1">Glutamate racemase</fullName>
        <ecNumber evidence="1">5.1.1.3</ecNumber>
    </recommendedName>
</protein>
<sequence length="265" mass="29813">MKPTILLYDSGMGGLTIYDAIRQTLPNAHYLYCFDNAYFPYSERSENVLIEQAVKIVQKIAEKYPLDMVVVACNTASTVVLPALREKFAFPIVGTVPAIKPAAAISQTKTIGLLATKGTVERPYVAELIEKYAKDCIVEKIGTTTLVELVEEKIRTGNVDQDRLSKVVAEWQTHPTLDTVILGCTHFPLVKQELQQLLPNVKYFIDPGNGIANRVSALLSESVPEEPEQNKENIAFCTKIDEEFFKREVIMQQWGFKRLELLNFL</sequence>
<gene>
    <name evidence="1" type="primary">murI</name>
    <name type="ordered locus">APL_1841</name>
</gene>